<comment type="subcellular location">
    <subcellularLocation>
        <location evidence="1">Cell membrane</location>
        <topology evidence="1">Multi-pass membrane protein</topology>
    </subcellularLocation>
</comment>
<comment type="similarity">
    <text evidence="1">Belongs to the UPF0391 family.</text>
</comment>
<organism>
    <name type="scientific">Bradyrhizobium diazoefficiens (strain JCM 10833 / BCRC 13528 / IAM 13628 / NBRC 14792 / USDA 110)</name>
    <dbReference type="NCBI Taxonomy" id="224911"/>
    <lineage>
        <taxon>Bacteria</taxon>
        <taxon>Pseudomonadati</taxon>
        <taxon>Pseudomonadota</taxon>
        <taxon>Alphaproteobacteria</taxon>
        <taxon>Hyphomicrobiales</taxon>
        <taxon>Nitrobacteraceae</taxon>
        <taxon>Bradyrhizobium</taxon>
    </lineage>
</organism>
<sequence length="57" mass="6219">MTILKWALIFLLVSIVAGVLGFTGISAASADIARFLFYVFVVIFLVLLILGLTIFRA</sequence>
<feature type="chain" id="PRO_0000256716" description="UPF0391 membrane protein bsl5717">
    <location>
        <begin position="1"/>
        <end position="57"/>
    </location>
</feature>
<feature type="transmembrane region" description="Helical" evidence="1">
    <location>
        <begin position="6"/>
        <end position="26"/>
    </location>
</feature>
<feature type="transmembrane region" description="Helical" evidence="1">
    <location>
        <begin position="35"/>
        <end position="55"/>
    </location>
</feature>
<gene>
    <name type="ordered locus">bsl5717</name>
</gene>
<name>Y5717_BRADU</name>
<accession>Q89IC2</accession>
<proteinExistence type="inferred from homology"/>
<dbReference type="EMBL" id="BA000040">
    <property type="protein sequence ID" value="BAC50982.1"/>
    <property type="molecule type" value="Genomic_DNA"/>
</dbReference>
<dbReference type="RefSeq" id="NP_772357.1">
    <property type="nucleotide sequence ID" value="NC_004463.1"/>
</dbReference>
<dbReference type="RefSeq" id="WP_007612121.1">
    <property type="nucleotide sequence ID" value="NZ_CP011360.1"/>
</dbReference>
<dbReference type="STRING" id="224911.AAV28_26100"/>
<dbReference type="EnsemblBacteria" id="BAC50982">
    <property type="protein sequence ID" value="BAC50982"/>
    <property type="gene ID" value="BAC50982"/>
</dbReference>
<dbReference type="KEGG" id="bja:bsl5717"/>
<dbReference type="PATRIC" id="fig|224911.44.peg.5648"/>
<dbReference type="eggNOG" id="COG5487">
    <property type="taxonomic scope" value="Bacteria"/>
</dbReference>
<dbReference type="HOGENOM" id="CLU_187346_1_1_5"/>
<dbReference type="InParanoid" id="Q89IC2"/>
<dbReference type="OrthoDB" id="8021162at2"/>
<dbReference type="PhylomeDB" id="Q89IC2"/>
<dbReference type="Proteomes" id="UP000002526">
    <property type="component" value="Chromosome"/>
</dbReference>
<dbReference type="GO" id="GO:0005886">
    <property type="term" value="C:plasma membrane"/>
    <property type="evidence" value="ECO:0007669"/>
    <property type="project" value="UniProtKB-SubCell"/>
</dbReference>
<dbReference type="HAMAP" id="MF_01361">
    <property type="entry name" value="UPF0391"/>
    <property type="match status" value="1"/>
</dbReference>
<dbReference type="InterPro" id="IPR009760">
    <property type="entry name" value="DUF1328"/>
</dbReference>
<dbReference type="NCBIfam" id="NF010232">
    <property type="entry name" value="PRK13682.2-2"/>
    <property type="match status" value="1"/>
</dbReference>
<dbReference type="NCBIfam" id="NF010234">
    <property type="entry name" value="PRK13682.2-5"/>
    <property type="match status" value="1"/>
</dbReference>
<dbReference type="Pfam" id="PF07043">
    <property type="entry name" value="DUF1328"/>
    <property type="match status" value="1"/>
</dbReference>
<dbReference type="PIRSF" id="PIRSF036466">
    <property type="entry name" value="UCP036466"/>
    <property type="match status" value="1"/>
</dbReference>
<keyword id="KW-1003">Cell membrane</keyword>
<keyword id="KW-0472">Membrane</keyword>
<keyword id="KW-1185">Reference proteome</keyword>
<keyword id="KW-0812">Transmembrane</keyword>
<keyword id="KW-1133">Transmembrane helix</keyword>
<protein>
    <recommendedName>
        <fullName evidence="1">UPF0391 membrane protein bsl5717</fullName>
    </recommendedName>
</protein>
<evidence type="ECO:0000255" key="1">
    <source>
        <dbReference type="HAMAP-Rule" id="MF_01361"/>
    </source>
</evidence>
<reference key="1">
    <citation type="journal article" date="2002" name="DNA Res.">
        <title>Complete genomic sequence of nitrogen-fixing symbiotic bacterium Bradyrhizobium japonicum USDA110.</title>
        <authorList>
            <person name="Kaneko T."/>
            <person name="Nakamura Y."/>
            <person name="Sato S."/>
            <person name="Minamisawa K."/>
            <person name="Uchiumi T."/>
            <person name="Sasamoto S."/>
            <person name="Watanabe A."/>
            <person name="Idesawa K."/>
            <person name="Iriguchi M."/>
            <person name="Kawashima K."/>
            <person name="Kohara M."/>
            <person name="Matsumoto M."/>
            <person name="Shimpo S."/>
            <person name="Tsuruoka H."/>
            <person name="Wada T."/>
            <person name="Yamada M."/>
            <person name="Tabata S."/>
        </authorList>
    </citation>
    <scope>NUCLEOTIDE SEQUENCE [LARGE SCALE GENOMIC DNA]</scope>
    <source>
        <strain>JCM 10833 / BCRC 13528 / IAM 13628 / NBRC 14792 / USDA 110</strain>
    </source>
</reference>